<reference key="1">
    <citation type="journal article" date="2011" name="J. Bacteriol.">
        <title>Complete genome and proteome of Acholeplasma laidlawii.</title>
        <authorList>
            <person name="Lazarev V.N."/>
            <person name="Levitskii S.A."/>
            <person name="Basovskii Y.I."/>
            <person name="Chukin M.M."/>
            <person name="Akopian T.A."/>
            <person name="Vereshchagin V.V."/>
            <person name="Kostrjukova E.S."/>
            <person name="Kovaleva G.Y."/>
            <person name="Kazanov M.D."/>
            <person name="Malko D.B."/>
            <person name="Vitreschak A.G."/>
            <person name="Sernova N.V."/>
            <person name="Gelfand M.S."/>
            <person name="Demina I.A."/>
            <person name="Serebryakova M.V."/>
            <person name="Galyamina M.A."/>
            <person name="Vtyurin N.N."/>
            <person name="Rogov S.I."/>
            <person name="Alexeev D.G."/>
            <person name="Ladygina V.G."/>
            <person name="Govorun V.M."/>
        </authorList>
    </citation>
    <scope>NUCLEOTIDE SEQUENCE [LARGE SCALE GENOMIC DNA]</scope>
    <source>
        <strain>PG-8A</strain>
    </source>
</reference>
<evidence type="ECO:0000255" key="1">
    <source>
        <dbReference type="HAMAP-Rule" id="MF_00473"/>
    </source>
</evidence>
<accession>A9NHX0</accession>
<dbReference type="EC" id="5.3.1.9" evidence="1"/>
<dbReference type="EMBL" id="CP000896">
    <property type="protein sequence ID" value="ABX81950.1"/>
    <property type="molecule type" value="Genomic_DNA"/>
</dbReference>
<dbReference type="RefSeq" id="WP_012243281.1">
    <property type="nucleotide sequence ID" value="NC_010163.1"/>
</dbReference>
<dbReference type="SMR" id="A9NHX0"/>
<dbReference type="STRING" id="441768.ACL_1358"/>
<dbReference type="GeneID" id="41339488"/>
<dbReference type="KEGG" id="acl:ACL_1358"/>
<dbReference type="eggNOG" id="COG0166">
    <property type="taxonomic scope" value="Bacteria"/>
</dbReference>
<dbReference type="HOGENOM" id="CLU_037303_0_1_14"/>
<dbReference type="OrthoDB" id="140919at2"/>
<dbReference type="UniPathway" id="UPA00109">
    <property type="reaction ID" value="UER00181"/>
</dbReference>
<dbReference type="UniPathway" id="UPA00138"/>
<dbReference type="Proteomes" id="UP000008558">
    <property type="component" value="Chromosome"/>
</dbReference>
<dbReference type="GO" id="GO:0005829">
    <property type="term" value="C:cytosol"/>
    <property type="evidence" value="ECO:0007669"/>
    <property type="project" value="TreeGrafter"/>
</dbReference>
<dbReference type="GO" id="GO:0097367">
    <property type="term" value="F:carbohydrate derivative binding"/>
    <property type="evidence" value="ECO:0007669"/>
    <property type="project" value="InterPro"/>
</dbReference>
<dbReference type="GO" id="GO:0004347">
    <property type="term" value="F:glucose-6-phosphate isomerase activity"/>
    <property type="evidence" value="ECO:0007669"/>
    <property type="project" value="UniProtKB-UniRule"/>
</dbReference>
<dbReference type="GO" id="GO:0048029">
    <property type="term" value="F:monosaccharide binding"/>
    <property type="evidence" value="ECO:0007669"/>
    <property type="project" value="TreeGrafter"/>
</dbReference>
<dbReference type="GO" id="GO:0006094">
    <property type="term" value="P:gluconeogenesis"/>
    <property type="evidence" value="ECO:0007669"/>
    <property type="project" value="UniProtKB-UniRule"/>
</dbReference>
<dbReference type="GO" id="GO:0051156">
    <property type="term" value="P:glucose 6-phosphate metabolic process"/>
    <property type="evidence" value="ECO:0007669"/>
    <property type="project" value="TreeGrafter"/>
</dbReference>
<dbReference type="GO" id="GO:0006096">
    <property type="term" value="P:glycolytic process"/>
    <property type="evidence" value="ECO:0007669"/>
    <property type="project" value="UniProtKB-UniRule"/>
</dbReference>
<dbReference type="CDD" id="cd05015">
    <property type="entry name" value="SIS_PGI_1"/>
    <property type="match status" value="1"/>
</dbReference>
<dbReference type="CDD" id="cd05016">
    <property type="entry name" value="SIS_PGI_2"/>
    <property type="match status" value="1"/>
</dbReference>
<dbReference type="FunFam" id="3.40.50.10490:FF:000015">
    <property type="entry name" value="Glucose-6-phosphate isomerase"/>
    <property type="match status" value="1"/>
</dbReference>
<dbReference type="FunFam" id="3.40.50.10490:FF:000016">
    <property type="entry name" value="Glucose-6-phosphate isomerase"/>
    <property type="match status" value="1"/>
</dbReference>
<dbReference type="Gene3D" id="3.40.50.10490">
    <property type="entry name" value="Glucose-6-phosphate isomerase like protein, domain 1"/>
    <property type="match status" value="2"/>
</dbReference>
<dbReference type="HAMAP" id="MF_00473">
    <property type="entry name" value="G6P_isomerase"/>
    <property type="match status" value="1"/>
</dbReference>
<dbReference type="InterPro" id="IPR001672">
    <property type="entry name" value="G6P_Isomerase"/>
</dbReference>
<dbReference type="InterPro" id="IPR018189">
    <property type="entry name" value="Phosphoglucose_isomerase_CS"/>
</dbReference>
<dbReference type="InterPro" id="IPR046348">
    <property type="entry name" value="SIS_dom_sf"/>
</dbReference>
<dbReference type="InterPro" id="IPR035476">
    <property type="entry name" value="SIS_PGI_1"/>
</dbReference>
<dbReference type="InterPro" id="IPR035482">
    <property type="entry name" value="SIS_PGI_2"/>
</dbReference>
<dbReference type="NCBIfam" id="NF010697">
    <property type="entry name" value="PRK14097.1"/>
    <property type="match status" value="1"/>
</dbReference>
<dbReference type="PANTHER" id="PTHR11469">
    <property type="entry name" value="GLUCOSE-6-PHOSPHATE ISOMERASE"/>
    <property type="match status" value="1"/>
</dbReference>
<dbReference type="PANTHER" id="PTHR11469:SF1">
    <property type="entry name" value="GLUCOSE-6-PHOSPHATE ISOMERASE"/>
    <property type="match status" value="1"/>
</dbReference>
<dbReference type="Pfam" id="PF00342">
    <property type="entry name" value="PGI"/>
    <property type="match status" value="1"/>
</dbReference>
<dbReference type="PRINTS" id="PR00662">
    <property type="entry name" value="G6PISOMERASE"/>
</dbReference>
<dbReference type="SUPFAM" id="SSF53697">
    <property type="entry name" value="SIS domain"/>
    <property type="match status" value="1"/>
</dbReference>
<dbReference type="PROSITE" id="PS00765">
    <property type="entry name" value="P_GLUCOSE_ISOMERASE_1"/>
    <property type="match status" value="1"/>
</dbReference>
<dbReference type="PROSITE" id="PS00174">
    <property type="entry name" value="P_GLUCOSE_ISOMERASE_2"/>
    <property type="match status" value="1"/>
</dbReference>
<dbReference type="PROSITE" id="PS51463">
    <property type="entry name" value="P_GLUCOSE_ISOMERASE_3"/>
    <property type="match status" value="1"/>
</dbReference>
<protein>
    <recommendedName>
        <fullName evidence="1">Glucose-6-phosphate isomerase</fullName>
        <shortName evidence="1">GPI</shortName>
        <ecNumber evidence="1">5.3.1.9</ecNumber>
    </recommendedName>
    <alternativeName>
        <fullName evidence="1">Phosphoglucose isomerase</fullName>
        <shortName evidence="1">PGI</shortName>
    </alternativeName>
    <alternativeName>
        <fullName evidence="1">Phosphohexose isomerase</fullName>
        <shortName evidence="1">PHI</shortName>
    </alternativeName>
</protein>
<sequence>MIKLDIKDAKKFLKTNVFSLQDQVNELHDVIQNKSGLGNDFLGWLDLPLTYDKEELDRIYKLKEQHKNVDAIVVIGIGGSYLGAKAGYEFLKTPFKKQKPELIFAGHHLSANYLKHLLKYLNKKNYVINVISKSGTTTEPAVAFRLLKAHIENKYGVKEARKRIFATTDKARGSLYQLAINEGYERFVIEDNVGGRFSVLSAVGLLPFVFVGIDVEKMIKGAQDAYHDAQDPSLKKNKAYLYAVTRFLLNQSGKDVEYLINYEPRLAFFAEWWKQLFGESEGKGGKGLLVHSASFTTDLHSLGQQIQDGNRIIFETVLNVKKTDKLSIPFVEEDLDKLNYIAGKEISYVNEQAFLGTKEAHIDGGVPNIVITIDKMDAYHFGYLVYFFEIACAMSAYLLEVNPFDQPGVEAYKKNMFRLLGKK</sequence>
<proteinExistence type="inferred from homology"/>
<gene>
    <name evidence="1" type="primary">pgi</name>
    <name type="ordered locus">ACL_1358</name>
</gene>
<name>G6PI_ACHLI</name>
<keyword id="KW-0963">Cytoplasm</keyword>
<keyword id="KW-0312">Gluconeogenesis</keyword>
<keyword id="KW-0324">Glycolysis</keyword>
<keyword id="KW-0413">Isomerase</keyword>
<keyword id="KW-1185">Reference proteome</keyword>
<comment type="function">
    <text evidence="1">Catalyzes the reversible isomerization of glucose-6-phosphate to fructose-6-phosphate.</text>
</comment>
<comment type="catalytic activity">
    <reaction evidence="1">
        <text>alpha-D-glucose 6-phosphate = beta-D-fructose 6-phosphate</text>
        <dbReference type="Rhea" id="RHEA:11816"/>
        <dbReference type="ChEBI" id="CHEBI:57634"/>
        <dbReference type="ChEBI" id="CHEBI:58225"/>
        <dbReference type="EC" id="5.3.1.9"/>
    </reaction>
</comment>
<comment type="pathway">
    <text evidence="1">Carbohydrate biosynthesis; gluconeogenesis.</text>
</comment>
<comment type="pathway">
    <text evidence="1">Carbohydrate degradation; glycolysis; D-glyceraldehyde 3-phosphate and glycerone phosphate from D-glucose: step 2/4.</text>
</comment>
<comment type="subcellular location">
    <subcellularLocation>
        <location evidence="1">Cytoplasm</location>
    </subcellularLocation>
</comment>
<comment type="similarity">
    <text evidence="1">Belongs to the GPI family.</text>
</comment>
<organism>
    <name type="scientific">Acholeplasma laidlawii (strain PG-8A)</name>
    <dbReference type="NCBI Taxonomy" id="441768"/>
    <lineage>
        <taxon>Bacteria</taxon>
        <taxon>Bacillati</taxon>
        <taxon>Mycoplasmatota</taxon>
        <taxon>Mollicutes</taxon>
        <taxon>Acholeplasmatales</taxon>
        <taxon>Acholeplasmataceae</taxon>
        <taxon>Acholeplasma</taxon>
    </lineage>
</organism>
<feature type="chain" id="PRO_1000081229" description="Glucose-6-phosphate isomerase">
    <location>
        <begin position="1"/>
        <end position="423"/>
    </location>
</feature>
<feature type="active site" description="Proton donor" evidence="1">
    <location>
        <position position="279"/>
    </location>
</feature>
<feature type="active site" evidence="1">
    <location>
        <position position="300"/>
    </location>
</feature>
<feature type="active site" evidence="1">
    <location>
        <position position="413"/>
    </location>
</feature>